<evidence type="ECO:0000250" key="1"/>
<evidence type="ECO:0000255" key="2">
    <source>
        <dbReference type="HAMAP-Rule" id="MF_00047"/>
    </source>
</evidence>
<proteinExistence type="inferred from homology"/>
<gene>
    <name evidence="2" type="primary">ddl</name>
    <name type="ordered locus">lhv_0143</name>
</gene>
<reference key="1">
    <citation type="journal article" date="2008" name="J. Bacteriol.">
        <title>Genome sequence of Lactobacillus helveticus: an organism distinguished by selective gene loss and IS element expansion.</title>
        <authorList>
            <person name="Callanan M."/>
            <person name="Kaleta P."/>
            <person name="O'Callaghan J."/>
            <person name="O'Sullivan O."/>
            <person name="Jordan K."/>
            <person name="McAuliffe O."/>
            <person name="Sangrador-Vegas A."/>
            <person name="Slattery L."/>
            <person name="Fitzgerald G.F."/>
            <person name="Beresford T."/>
            <person name="Ross R.P."/>
        </authorList>
    </citation>
    <scope>NUCLEOTIDE SEQUENCE [LARGE SCALE GENOMIC DNA]</scope>
    <source>
        <strain>DPC 4571</strain>
    </source>
</reference>
<dbReference type="EC" id="6.3.2.4" evidence="2"/>
<dbReference type="EMBL" id="CP000517">
    <property type="protein sequence ID" value="ABX26408.1"/>
    <property type="molecule type" value="Genomic_DNA"/>
</dbReference>
<dbReference type="RefSeq" id="WP_003625446.1">
    <property type="nucleotide sequence ID" value="NC_010080.1"/>
</dbReference>
<dbReference type="SMR" id="A8YWP6"/>
<dbReference type="KEGG" id="lhe:lhv_0143"/>
<dbReference type="eggNOG" id="COG1181">
    <property type="taxonomic scope" value="Bacteria"/>
</dbReference>
<dbReference type="HOGENOM" id="CLU_039268_0_0_9"/>
<dbReference type="UniPathway" id="UPA00219"/>
<dbReference type="Proteomes" id="UP000000790">
    <property type="component" value="Chromosome"/>
</dbReference>
<dbReference type="GO" id="GO:0005829">
    <property type="term" value="C:cytosol"/>
    <property type="evidence" value="ECO:0007669"/>
    <property type="project" value="TreeGrafter"/>
</dbReference>
<dbReference type="GO" id="GO:0005524">
    <property type="term" value="F:ATP binding"/>
    <property type="evidence" value="ECO:0007669"/>
    <property type="project" value="UniProtKB-KW"/>
</dbReference>
<dbReference type="GO" id="GO:0008716">
    <property type="term" value="F:D-alanine-D-alanine ligase activity"/>
    <property type="evidence" value="ECO:0007669"/>
    <property type="project" value="UniProtKB-UniRule"/>
</dbReference>
<dbReference type="GO" id="GO:0046872">
    <property type="term" value="F:metal ion binding"/>
    <property type="evidence" value="ECO:0007669"/>
    <property type="project" value="UniProtKB-KW"/>
</dbReference>
<dbReference type="GO" id="GO:0071555">
    <property type="term" value="P:cell wall organization"/>
    <property type="evidence" value="ECO:0007669"/>
    <property type="project" value="UniProtKB-KW"/>
</dbReference>
<dbReference type="GO" id="GO:0009252">
    <property type="term" value="P:peptidoglycan biosynthetic process"/>
    <property type="evidence" value="ECO:0007669"/>
    <property type="project" value="UniProtKB-UniRule"/>
</dbReference>
<dbReference type="GO" id="GO:0008360">
    <property type="term" value="P:regulation of cell shape"/>
    <property type="evidence" value="ECO:0007669"/>
    <property type="project" value="UniProtKB-KW"/>
</dbReference>
<dbReference type="FunFam" id="3.30.1490.20:FF:000007">
    <property type="entry name" value="D-alanine--D-alanine ligase"/>
    <property type="match status" value="1"/>
</dbReference>
<dbReference type="FunFam" id="3.30.470.20:FF:000008">
    <property type="entry name" value="D-alanine--D-alanine ligase"/>
    <property type="match status" value="1"/>
</dbReference>
<dbReference type="Gene3D" id="3.40.50.20">
    <property type="match status" value="1"/>
</dbReference>
<dbReference type="Gene3D" id="3.30.1490.20">
    <property type="entry name" value="ATP-grasp fold, A domain"/>
    <property type="match status" value="1"/>
</dbReference>
<dbReference type="Gene3D" id="3.30.470.20">
    <property type="entry name" value="ATP-grasp fold, B domain"/>
    <property type="match status" value="1"/>
</dbReference>
<dbReference type="HAMAP" id="MF_00047">
    <property type="entry name" value="Dala_Dala_lig"/>
    <property type="match status" value="1"/>
</dbReference>
<dbReference type="InterPro" id="IPR011761">
    <property type="entry name" value="ATP-grasp"/>
</dbReference>
<dbReference type="InterPro" id="IPR013815">
    <property type="entry name" value="ATP_grasp_subdomain_1"/>
</dbReference>
<dbReference type="InterPro" id="IPR000291">
    <property type="entry name" value="D-Ala_lig_Van_CS"/>
</dbReference>
<dbReference type="InterPro" id="IPR005905">
    <property type="entry name" value="D_ala_D_ala"/>
</dbReference>
<dbReference type="InterPro" id="IPR011095">
    <property type="entry name" value="Dala_Dala_lig_C"/>
</dbReference>
<dbReference type="InterPro" id="IPR011127">
    <property type="entry name" value="Dala_Dala_lig_N"/>
</dbReference>
<dbReference type="InterPro" id="IPR016185">
    <property type="entry name" value="PreATP-grasp_dom_sf"/>
</dbReference>
<dbReference type="NCBIfam" id="TIGR01205">
    <property type="entry name" value="D_ala_D_alaTIGR"/>
    <property type="match status" value="1"/>
</dbReference>
<dbReference type="NCBIfam" id="NF002528">
    <property type="entry name" value="PRK01966.1-4"/>
    <property type="match status" value="1"/>
</dbReference>
<dbReference type="PANTHER" id="PTHR23132">
    <property type="entry name" value="D-ALANINE--D-ALANINE LIGASE"/>
    <property type="match status" value="1"/>
</dbReference>
<dbReference type="PANTHER" id="PTHR23132:SF25">
    <property type="entry name" value="D-ALANINE--D-ALANINE LIGASE A"/>
    <property type="match status" value="1"/>
</dbReference>
<dbReference type="Pfam" id="PF07478">
    <property type="entry name" value="Dala_Dala_lig_C"/>
    <property type="match status" value="1"/>
</dbReference>
<dbReference type="Pfam" id="PF01820">
    <property type="entry name" value="Dala_Dala_lig_N"/>
    <property type="match status" value="1"/>
</dbReference>
<dbReference type="PIRSF" id="PIRSF039102">
    <property type="entry name" value="Ddl/VanB"/>
    <property type="match status" value="1"/>
</dbReference>
<dbReference type="SUPFAM" id="SSF56059">
    <property type="entry name" value="Glutathione synthetase ATP-binding domain-like"/>
    <property type="match status" value="1"/>
</dbReference>
<dbReference type="SUPFAM" id="SSF52440">
    <property type="entry name" value="PreATP-grasp domain"/>
    <property type="match status" value="1"/>
</dbReference>
<dbReference type="PROSITE" id="PS50975">
    <property type="entry name" value="ATP_GRASP"/>
    <property type="match status" value="1"/>
</dbReference>
<dbReference type="PROSITE" id="PS00843">
    <property type="entry name" value="DALA_DALA_LIGASE_1"/>
    <property type="match status" value="1"/>
</dbReference>
<comment type="function">
    <text evidence="2">Cell wall formation.</text>
</comment>
<comment type="catalytic activity">
    <reaction evidence="2">
        <text>2 D-alanine + ATP = D-alanyl-D-alanine + ADP + phosphate + H(+)</text>
        <dbReference type="Rhea" id="RHEA:11224"/>
        <dbReference type="ChEBI" id="CHEBI:15378"/>
        <dbReference type="ChEBI" id="CHEBI:30616"/>
        <dbReference type="ChEBI" id="CHEBI:43474"/>
        <dbReference type="ChEBI" id="CHEBI:57416"/>
        <dbReference type="ChEBI" id="CHEBI:57822"/>
        <dbReference type="ChEBI" id="CHEBI:456216"/>
        <dbReference type="EC" id="6.3.2.4"/>
    </reaction>
</comment>
<comment type="cofactor">
    <cofactor evidence="1">
        <name>Mg(2+)</name>
        <dbReference type="ChEBI" id="CHEBI:18420"/>
    </cofactor>
    <cofactor evidence="1">
        <name>Mn(2+)</name>
        <dbReference type="ChEBI" id="CHEBI:29035"/>
    </cofactor>
    <text evidence="1">Binds 2 magnesium or manganese ions per subunit.</text>
</comment>
<comment type="pathway">
    <text evidence="2">Cell wall biogenesis; peptidoglycan biosynthesis.</text>
</comment>
<comment type="subcellular location">
    <subcellularLocation>
        <location evidence="2">Cytoplasm</location>
    </subcellularLocation>
</comment>
<comment type="similarity">
    <text evidence="2">Belongs to the D-alanine--D-alanine ligase family.</text>
</comment>
<organism>
    <name type="scientific">Lactobacillus helveticus (strain DPC 4571)</name>
    <dbReference type="NCBI Taxonomy" id="405566"/>
    <lineage>
        <taxon>Bacteria</taxon>
        <taxon>Bacillati</taxon>
        <taxon>Bacillota</taxon>
        <taxon>Bacilli</taxon>
        <taxon>Lactobacillales</taxon>
        <taxon>Lactobacillaceae</taxon>
        <taxon>Lactobacillus</taxon>
    </lineage>
</organism>
<protein>
    <recommendedName>
        <fullName evidence="2">D-alanine--D-alanine ligase</fullName>
        <ecNumber evidence="2">6.3.2.4</ecNumber>
    </recommendedName>
    <alternativeName>
        <fullName evidence="2">D-Ala-D-Ala ligase</fullName>
    </alternativeName>
    <alternativeName>
        <fullName evidence="2">D-alanylalanine synthetase</fullName>
    </alternativeName>
</protein>
<accession>A8YWP6</accession>
<keyword id="KW-0067">ATP-binding</keyword>
<keyword id="KW-0133">Cell shape</keyword>
<keyword id="KW-0961">Cell wall biogenesis/degradation</keyword>
<keyword id="KW-0963">Cytoplasm</keyword>
<keyword id="KW-0436">Ligase</keyword>
<keyword id="KW-0460">Magnesium</keyword>
<keyword id="KW-0464">Manganese</keyword>
<keyword id="KW-0479">Metal-binding</keyword>
<keyword id="KW-0547">Nucleotide-binding</keyword>
<keyword id="KW-0573">Peptidoglycan synthesis</keyword>
<sequence>MTKKTQVGLIFGGNSSEYEVSIVSCRNIYKAIDKEKFDVHPIWITNEGYFANEEESFKVLEDPSYQVKNPHKVHNISNLIELENLPEIDVFFPIVHGNLGEDGVLQGLFRLMNKPFVGDDVLAAAVTMDKEFTKILAQRVGVPVADWITIKRFEYDDKNNDKLDYEKVAEKLGRDMFVKPSNQGSSVGVSHVTNADEYAAALKEAFKYDDKVLVEETVPGTEVETAVLGNDKPIVAGVGQITNAKGSFYSYKNKYDDNSTSKLQIPADLPQEIIDTVRRNARKVYEVTECSGMARIDSMLTPGGKVVLTEVNALPGFTNISMYPKLFEEAGVPYTELITRLIEVGMERFDHKKTLLHKHD</sequence>
<name>DDL_LACH4</name>
<feature type="chain" id="PRO_0000341120" description="D-alanine--D-alanine ligase">
    <location>
        <begin position="1"/>
        <end position="360"/>
    </location>
</feature>
<feature type="domain" description="ATP-grasp" evidence="2">
    <location>
        <begin position="134"/>
        <end position="343"/>
    </location>
</feature>
<feature type="binding site" evidence="2">
    <location>
        <begin position="169"/>
        <end position="224"/>
    </location>
    <ligand>
        <name>ATP</name>
        <dbReference type="ChEBI" id="CHEBI:30616"/>
    </ligand>
</feature>
<feature type="binding site" evidence="2">
    <location>
        <position position="297"/>
    </location>
    <ligand>
        <name>Mg(2+)</name>
        <dbReference type="ChEBI" id="CHEBI:18420"/>
        <label>1</label>
    </ligand>
</feature>
<feature type="binding site" evidence="2">
    <location>
        <position position="310"/>
    </location>
    <ligand>
        <name>Mg(2+)</name>
        <dbReference type="ChEBI" id="CHEBI:18420"/>
        <label>1</label>
    </ligand>
</feature>
<feature type="binding site" evidence="2">
    <location>
        <position position="310"/>
    </location>
    <ligand>
        <name>Mg(2+)</name>
        <dbReference type="ChEBI" id="CHEBI:18420"/>
        <label>2</label>
    </ligand>
</feature>
<feature type="binding site" evidence="2">
    <location>
        <position position="312"/>
    </location>
    <ligand>
        <name>Mg(2+)</name>
        <dbReference type="ChEBI" id="CHEBI:18420"/>
        <label>2</label>
    </ligand>
</feature>